<sequence length="336" mass="36961">MFENMMDLGSLRHGDELIKRGFAKMTKGGVIMDVTTAEQARIAEKAGAVAVMALERVPADIRANGGVARMADPLKIKEIIDAVSIPVMAKVRIGHISEAYVLESLGVDMLDESEVLTPADPFFHINKKIYKVPVVCGARTFPEAVRRIFEGAAMIRTKGEAGTGNIIEAMRHIRKVNDGINVLLRLNESDMKKVAENIASSYFILRKETSKELFGYDNFPDMDDLYYGMDSDKIINGILKTLKEIKKYRRLPVVNFAAGGVATPSDAALMMKMGLDGVFVGSGIFKSKDPARMASAIVEAAENYEDYKTIADVSSGLQGMEGLEIDNIERLQERGW</sequence>
<accession>Q6L2D8</accession>
<dbReference type="EC" id="4.3.3.6" evidence="1"/>
<dbReference type="EMBL" id="AE017261">
    <property type="protein sequence ID" value="AAT42864.1"/>
    <property type="molecule type" value="Genomic_DNA"/>
</dbReference>
<dbReference type="SMR" id="Q6L2D8"/>
<dbReference type="FunCoup" id="Q6L2D8">
    <property type="interactions" value="139"/>
</dbReference>
<dbReference type="STRING" id="263820.PTO0279"/>
<dbReference type="PaxDb" id="263820-PTO0279"/>
<dbReference type="KEGG" id="pto:PTO0279"/>
<dbReference type="PATRIC" id="fig|263820.9.peg.300"/>
<dbReference type="eggNOG" id="arCOG04075">
    <property type="taxonomic scope" value="Archaea"/>
</dbReference>
<dbReference type="HOGENOM" id="CLU_055352_1_0_2"/>
<dbReference type="InParanoid" id="Q6L2D8"/>
<dbReference type="OrthoDB" id="6840at2157"/>
<dbReference type="UniPathway" id="UPA00245"/>
<dbReference type="Proteomes" id="UP000000438">
    <property type="component" value="Chromosome"/>
</dbReference>
<dbReference type="GO" id="GO:0036381">
    <property type="term" value="F:pyridoxal 5'-phosphate synthase (glutamine hydrolysing) activity"/>
    <property type="evidence" value="ECO:0007669"/>
    <property type="project" value="UniProtKB-UniRule"/>
</dbReference>
<dbReference type="GO" id="GO:0006520">
    <property type="term" value="P:amino acid metabolic process"/>
    <property type="evidence" value="ECO:0007669"/>
    <property type="project" value="TreeGrafter"/>
</dbReference>
<dbReference type="GO" id="GO:0042823">
    <property type="term" value="P:pyridoxal phosphate biosynthetic process"/>
    <property type="evidence" value="ECO:0007669"/>
    <property type="project" value="UniProtKB-UniRule"/>
</dbReference>
<dbReference type="GO" id="GO:0008615">
    <property type="term" value="P:pyridoxine biosynthetic process"/>
    <property type="evidence" value="ECO:0007669"/>
    <property type="project" value="TreeGrafter"/>
</dbReference>
<dbReference type="Gene3D" id="3.20.20.70">
    <property type="entry name" value="Aldolase class I"/>
    <property type="match status" value="1"/>
</dbReference>
<dbReference type="HAMAP" id="MF_01824">
    <property type="entry name" value="PdxS"/>
    <property type="match status" value="1"/>
</dbReference>
<dbReference type="InterPro" id="IPR013785">
    <property type="entry name" value="Aldolase_TIM"/>
</dbReference>
<dbReference type="InterPro" id="IPR001852">
    <property type="entry name" value="PdxS/SNZ"/>
</dbReference>
<dbReference type="InterPro" id="IPR033755">
    <property type="entry name" value="PdxS/SNZ_N"/>
</dbReference>
<dbReference type="InterPro" id="IPR011060">
    <property type="entry name" value="RibuloseP-bd_barrel"/>
</dbReference>
<dbReference type="InterPro" id="IPR033983">
    <property type="entry name" value="Thiazole_synthase_ThiG"/>
</dbReference>
<dbReference type="NCBIfam" id="NF003215">
    <property type="entry name" value="PRK04180.1"/>
    <property type="match status" value="1"/>
</dbReference>
<dbReference type="NCBIfam" id="TIGR00343">
    <property type="entry name" value="pyridoxal 5'-phosphate synthase lyase subunit PdxS"/>
    <property type="match status" value="1"/>
</dbReference>
<dbReference type="PANTHER" id="PTHR31829">
    <property type="entry name" value="PYRIDOXAL 5'-PHOSPHATE SYNTHASE SUBUNIT SNZ1-RELATED"/>
    <property type="match status" value="1"/>
</dbReference>
<dbReference type="PANTHER" id="PTHR31829:SF0">
    <property type="entry name" value="PYRIDOXAL 5'-PHOSPHATE SYNTHASE SUBUNIT SNZ1-RELATED"/>
    <property type="match status" value="1"/>
</dbReference>
<dbReference type="Pfam" id="PF01680">
    <property type="entry name" value="SOR_SNZ"/>
    <property type="match status" value="1"/>
</dbReference>
<dbReference type="Pfam" id="PF05690">
    <property type="entry name" value="ThiG"/>
    <property type="match status" value="1"/>
</dbReference>
<dbReference type="PIRSF" id="PIRSF029271">
    <property type="entry name" value="Pdx1"/>
    <property type="match status" value="1"/>
</dbReference>
<dbReference type="SUPFAM" id="SSF51366">
    <property type="entry name" value="Ribulose-phoshate binding barrel"/>
    <property type="match status" value="1"/>
</dbReference>
<dbReference type="PROSITE" id="PS01235">
    <property type="entry name" value="PDXS_SNZ_1"/>
    <property type="match status" value="1"/>
</dbReference>
<dbReference type="PROSITE" id="PS51129">
    <property type="entry name" value="PDXS_SNZ_2"/>
    <property type="match status" value="1"/>
</dbReference>
<proteinExistence type="inferred from homology"/>
<protein>
    <recommendedName>
        <fullName evidence="1">Pyridoxal 5'-phosphate synthase subunit PdxS</fullName>
        <shortName evidence="1">PLP synthase subunit PdxS</shortName>
        <ecNumber evidence="1">4.3.3.6</ecNumber>
    </recommendedName>
    <alternativeName>
        <fullName evidence="1">Pdx1</fullName>
    </alternativeName>
</protein>
<keyword id="KW-0456">Lyase</keyword>
<keyword id="KW-0663">Pyridoxal phosphate</keyword>
<keyword id="KW-0704">Schiff base</keyword>
<name>PDXS_PICTO</name>
<organism>
    <name type="scientific">Picrophilus torridus (strain ATCC 700027 / DSM 9790 / JCM 10055 / NBRC 100828 / KAW 2/3)</name>
    <dbReference type="NCBI Taxonomy" id="1122961"/>
    <lineage>
        <taxon>Archaea</taxon>
        <taxon>Methanobacteriati</taxon>
        <taxon>Thermoplasmatota</taxon>
        <taxon>Thermoplasmata</taxon>
        <taxon>Thermoplasmatales</taxon>
        <taxon>Picrophilaceae</taxon>
        <taxon>Picrophilus</taxon>
    </lineage>
</organism>
<feature type="chain" id="PRO_0000109441" description="Pyridoxal 5'-phosphate synthase subunit PdxS">
    <location>
        <begin position="1"/>
        <end position="336"/>
    </location>
</feature>
<feature type="active site" description="Schiff-base intermediate with D-ribose 5-phosphate" evidence="1">
    <location>
        <position position="90"/>
    </location>
</feature>
<feature type="binding site" evidence="1">
    <location>
        <position position="33"/>
    </location>
    <ligand>
        <name>D-ribose 5-phosphate</name>
        <dbReference type="ChEBI" id="CHEBI:78346"/>
    </ligand>
</feature>
<feature type="binding site" evidence="1">
    <location>
        <position position="162"/>
    </location>
    <ligand>
        <name>D-ribose 5-phosphate</name>
        <dbReference type="ChEBI" id="CHEBI:78346"/>
    </ligand>
</feature>
<feature type="binding site" evidence="1">
    <location>
        <position position="174"/>
    </location>
    <ligand>
        <name>D-glyceraldehyde 3-phosphate</name>
        <dbReference type="ChEBI" id="CHEBI:59776"/>
    </ligand>
</feature>
<feature type="binding site" evidence="1">
    <location>
        <position position="260"/>
    </location>
    <ligand>
        <name>D-ribose 5-phosphate</name>
        <dbReference type="ChEBI" id="CHEBI:78346"/>
    </ligand>
</feature>
<feature type="binding site" evidence="1">
    <location>
        <begin position="281"/>
        <end position="282"/>
    </location>
    <ligand>
        <name>D-ribose 5-phosphate</name>
        <dbReference type="ChEBI" id="CHEBI:78346"/>
    </ligand>
</feature>
<reference key="1">
    <citation type="journal article" date="2004" name="Proc. Natl. Acad. Sci. U.S.A.">
        <title>Genome sequence of Picrophilus torridus and its implications for life around pH 0.</title>
        <authorList>
            <person name="Fuetterer O."/>
            <person name="Angelov A."/>
            <person name="Liesegang H."/>
            <person name="Gottschalk G."/>
            <person name="Schleper C."/>
            <person name="Schepers B."/>
            <person name="Dock C."/>
            <person name="Antranikian G."/>
            <person name="Liebl W."/>
        </authorList>
    </citation>
    <scope>NUCLEOTIDE SEQUENCE [LARGE SCALE GENOMIC DNA]</scope>
    <source>
        <strain>ATCC 700027 / DSM 9790 / JCM 10055 / NBRC 100828 / KAW 2/3</strain>
    </source>
</reference>
<evidence type="ECO:0000255" key="1">
    <source>
        <dbReference type="HAMAP-Rule" id="MF_01824"/>
    </source>
</evidence>
<comment type="function">
    <text evidence="1">Catalyzes the formation of pyridoxal 5'-phosphate from ribose 5-phosphate (RBP), glyceraldehyde 3-phosphate (G3P) and ammonia. The ammonia is provided by the PdxT subunit. Can also use ribulose 5-phosphate and dihydroxyacetone phosphate as substrates, resulting from enzyme-catalyzed isomerization of RBP and G3P, respectively.</text>
</comment>
<comment type="catalytic activity">
    <reaction evidence="1">
        <text>aldehydo-D-ribose 5-phosphate + D-glyceraldehyde 3-phosphate + L-glutamine = pyridoxal 5'-phosphate + L-glutamate + phosphate + 3 H2O + H(+)</text>
        <dbReference type="Rhea" id="RHEA:31507"/>
        <dbReference type="ChEBI" id="CHEBI:15377"/>
        <dbReference type="ChEBI" id="CHEBI:15378"/>
        <dbReference type="ChEBI" id="CHEBI:29985"/>
        <dbReference type="ChEBI" id="CHEBI:43474"/>
        <dbReference type="ChEBI" id="CHEBI:58273"/>
        <dbReference type="ChEBI" id="CHEBI:58359"/>
        <dbReference type="ChEBI" id="CHEBI:59776"/>
        <dbReference type="ChEBI" id="CHEBI:597326"/>
        <dbReference type="EC" id="4.3.3.6"/>
    </reaction>
</comment>
<comment type="pathway">
    <text evidence="1">Cofactor biosynthesis; pyridoxal 5'-phosphate biosynthesis.</text>
</comment>
<comment type="subunit">
    <text evidence="1">In the presence of PdxT, forms a dodecamer of heterodimers.</text>
</comment>
<comment type="similarity">
    <text evidence="1">Belongs to the PdxS/SNZ family.</text>
</comment>
<gene>
    <name evidence="1" type="primary">pdxS</name>
    <name type="ordered locus">PTO0279</name>
</gene>